<feature type="chain" id="PRO_1000013126" description="Putative membrane protein insertion efficiency factor">
    <location>
        <begin position="1"/>
        <end position="84"/>
    </location>
</feature>
<organism>
    <name type="scientific">Shewanella frigidimarina (strain NCIMB 400)</name>
    <dbReference type="NCBI Taxonomy" id="318167"/>
    <lineage>
        <taxon>Bacteria</taxon>
        <taxon>Pseudomonadati</taxon>
        <taxon>Pseudomonadota</taxon>
        <taxon>Gammaproteobacteria</taxon>
        <taxon>Alteromonadales</taxon>
        <taxon>Shewanellaceae</taxon>
        <taxon>Shewanella</taxon>
    </lineage>
</organism>
<gene>
    <name type="ordered locus">Sfri_4064</name>
</gene>
<comment type="function">
    <text evidence="1">Could be involved in insertion of integral membrane proteins into the membrane.</text>
</comment>
<comment type="subcellular location">
    <subcellularLocation>
        <location evidence="1">Cell inner membrane</location>
        <topology evidence="1">Peripheral membrane protein</topology>
        <orientation evidence="1">Cytoplasmic side</orientation>
    </subcellularLocation>
</comment>
<comment type="similarity">
    <text evidence="1">Belongs to the UPF0161 family.</text>
</comment>
<sequence length="84" mass="9407">MAQTQSPLQWLATTVIRGYQILISPLLGPRCRFNPTCSYYAIEAIKTHGTVKGSWFAMKRILKCHPLHPGGSDPVPPKNDRCNK</sequence>
<name>YIDD_SHEFN</name>
<evidence type="ECO:0000255" key="1">
    <source>
        <dbReference type="HAMAP-Rule" id="MF_00386"/>
    </source>
</evidence>
<reference key="1">
    <citation type="submission" date="2006-08" db="EMBL/GenBank/DDBJ databases">
        <title>Complete sequence of Shewanella frigidimarina NCIMB 400.</title>
        <authorList>
            <consortium name="US DOE Joint Genome Institute"/>
            <person name="Copeland A."/>
            <person name="Lucas S."/>
            <person name="Lapidus A."/>
            <person name="Barry K."/>
            <person name="Detter J.C."/>
            <person name="Glavina del Rio T."/>
            <person name="Hammon N."/>
            <person name="Israni S."/>
            <person name="Dalin E."/>
            <person name="Tice H."/>
            <person name="Pitluck S."/>
            <person name="Fredrickson J.K."/>
            <person name="Kolker E."/>
            <person name="McCuel L.A."/>
            <person name="DiChristina T."/>
            <person name="Nealson K.H."/>
            <person name="Newman D."/>
            <person name="Tiedje J.M."/>
            <person name="Zhou J."/>
            <person name="Romine M.F."/>
            <person name="Culley D.E."/>
            <person name="Serres M."/>
            <person name="Chertkov O."/>
            <person name="Brettin T."/>
            <person name="Bruce D."/>
            <person name="Han C."/>
            <person name="Tapia R."/>
            <person name="Gilna P."/>
            <person name="Schmutz J."/>
            <person name="Larimer F."/>
            <person name="Land M."/>
            <person name="Hauser L."/>
            <person name="Kyrpides N."/>
            <person name="Mikhailova N."/>
            <person name="Richardson P."/>
        </authorList>
    </citation>
    <scope>NUCLEOTIDE SEQUENCE [LARGE SCALE GENOMIC DNA]</scope>
    <source>
        <strain>NCIMB 400</strain>
    </source>
</reference>
<protein>
    <recommendedName>
        <fullName evidence="1">Putative membrane protein insertion efficiency factor</fullName>
    </recommendedName>
</protein>
<proteinExistence type="inferred from homology"/>
<accession>Q07VS5</accession>
<dbReference type="EMBL" id="CP000447">
    <property type="protein sequence ID" value="ABI73889.1"/>
    <property type="molecule type" value="Genomic_DNA"/>
</dbReference>
<dbReference type="STRING" id="318167.Sfri_4064"/>
<dbReference type="KEGG" id="sfr:Sfri_4064"/>
<dbReference type="eggNOG" id="COG0759">
    <property type="taxonomic scope" value="Bacteria"/>
</dbReference>
<dbReference type="HOGENOM" id="CLU_144811_5_2_6"/>
<dbReference type="OrthoDB" id="9801753at2"/>
<dbReference type="Proteomes" id="UP000000684">
    <property type="component" value="Chromosome"/>
</dbReference>
<dbReference type="GO" id="GO:0005886">
    <property type="term" value="C:plasma membrane"/>
    <property type="evidence" value="ECO:0007669"/>
    <property type="project" value="UniProtKB-SubCell"/>
</dbReference>
<dbReference type="HAMAP" id="MF_00386">
    <property type="entry name" value="UPF0161_YidD"/>
    <property type="match status" value="1"/>
</dbReference>
<dbReference type="InterPro" id="IPR002696">
    <property type="entry name" value="Membr_insert_effic_factor_YidD"/>
</dbReference>
<dbReference type="NCBIfam" id="TIGR00278">
    <property type="entry name" value="membrane protein insertion efficiency factor YidD"/>
    <property type="match status" value="1"/>
</dbReference>
<dbReference type="PANTHER" id="PTHR33383">
    <property type="entry name" value="MEMBRANE PROTEIN INSERTION EFFICIENCY FACTOR-RELATED"/>
    <property type="match status" value="1"/>
</dbReference>
<dbReference type="PANTHER" id="PTHR33383:SF1">
    <property type="entry name" value="MEMBRANE PROTEIN INSERTION EFFICIENCY FACTOR-RELATED"/>
    <property type="match status" value="1"/>
</dbReference>
<dbReference type="Pfam" id="PF01809">
    <property type="entry name" value="YidD"/>
    <property type="match status" value="1"/>
</dbReference>
<dbReference type="SMART" id="SM01234">
    <property type="entry name" value="Haemolytic"/>
    <property type="match status" value="1"/>
</dbReference>
<keyword id="KW-0997">Cell inner membrane</keyword>
<keyword id="KW-1003">Cell membrane</keyword>
<keyword id="KW-0472">Membrane</keyword>
<keyword id="KW-1185">Reference proteome</keyword>